<gene>
    <name evidence="1" type="primary">guaA</name>
    <name type="ordered locus">Swoo_1560</name>
</gene>
<name>GUAA_SHEWM</name>
<accession>B1KLC1</accession>
<keyword id="KW-0067">ATP-binding</keyword>
<keyword id="KW-0315">Glutamine amidotransferase</keyword>
<keyword id="KW-0332">GMP biosynthesis</keyword>
<keyword id="KW-0436">Ligase</keyword>
<keyword id="KW-0547">Nucleotide-binding</keyword>
<keyword id="KW-0658">Purine biosynthesis</keyword>
<keyword id="KW-1185">Reference proteome</keyword>
<organism>
    <name type="scientific">Shewanella woodyi (strain ATCC 51908 / MS32)</name>
    <dbReference type="NCBI Taxonomy" id="392500"/>
    <lineage>
        <taxon>Bacteria</taxon>
        <taxon>Pseudomonadati</taxon>
        <taxon>Pseudomonadota</taxon>
        <taxon>Gammaproteobacteria</taxon>
        <taxon>Alteromonadales</taxon>
        <taxon>Shewanellaceae</taxon>
        <taxon>Shewanella</taxon>
    </lineage>
</organism>
<reference key="1">
    <citation type="submission" date="2008-02" db="EMBL/GenBank/DDBJ databases">
        <title>Complete sequence of Shewanella woodyi ATCC 51908.</title>
        <authorList>
            <consortium name="US DOE Joint Genome Institute"/>
            <person name="Copeland A."/>
            <person name="Lucas S."/>
            <person name="Lapidus A."/>
            <person name="Glavina del Rio T."/>
            <person name="Dalin E."/>
            <person name="Tice H."/>
            <person name="Bruce D."/>
            <person name="Goodwin L."/>
            <person name="Pitluck S."/>
            <person name="Sims D."/>
            <person name="Brettin T."/>
            <person name="Detter J.C."/>
            <person name="Han C."/>
            <person name="Kuske C.R."/>
            <person name="Schmutz J."/>
            <person name="Larimer F."/>
            <person name="Land M."/>
            <person name="Hauser L."/>
            <person name="Kyrpides N."/>
            <person name="Lykidis A."/>
            <person name="Zhao J.-S."/>
            <person name="Richardson P."/>
        </authorList>
    </citation>
    <scope>NUCLEOTIDE SEQUENCE [LARGE SCALE GENOMIC DNA]</scope>
    <source>
        <strain>ATCC 51908 / MS32</strain>
    </source>
</reference>
<feature type="chain" id="PRO_1000120413" description="GMP synthase [glutamine-hydrolyzing]">
    <location>
        <begin position="1"/>
        <end position="525"/>
    </location>
</feature>
<feature type="domain" description="Glutamine amidotransferase type-1" evidence="1">
    <location>
        <begin position="8"/>
        <end position="207"/>
    </location>
</feature>
<feature type="domain" description="GMPS ATP-PPase" evidence="1">
    <location>
        <begin position="208"/>
        <end position="400"/>
    </location>
</feature>
<feature type="active site" description="Nucleophile" evidence="1">
    <location>
        <position position="85"/>
    </location>
</feature>
<feature type="active site" evidence="1">
    <location>
        <position position="181"/>
    </location>
</feature>
<feature type="active site" evidence="1">
    <location>
        <position position="183"/>
    </location>
</feature>
<feature type="binding site" evidence="1">
    <location>
        <begin position="235"/>
        <end position="241"/>
    </location>
    <ligand>
        <name>ATP</name>
        <dbReference type="ChEBI" id="CHEBI:30616"/>
    </ligand>
</feature>
<protein>
    <recommendedName>
        <fullName evidence="1">GMP synthase [glutamine-hydrolyzing]</fullName>
        <ecNumber evidence="1">6.3.5.2</ecNumber>
    </recommendedName>
    <alternativeName>
        <fullName evidence="1">GMP synthetase</fullName>
    </alternativeName>
    <alternativeName>
        <fullName evidence="1">Glutamine amidotransferase</fullName>
    </alternativeName>
</protein>
<comment type="function">
    <text evidence="1">Catalyzes the synthesis of GMP from XMP.</text>
</comment>
<comment type="catalytic activity">
    <reaction evidence="1">
        <text>XMP + L-glutamine + ATP + H2O = GMP + L-glutamate + AMP + diphosphate + 2 H(+)</text>
        <dbReference type="Rhea" id="RHEA:11680"/>
        <dbReference type="ChEBI" id="CHEBI:15377"/>
        <dbReference type="ChEBI" id="CHEBI:15378"/>
        <dbReference type="ChEBI" id="CHEBI:29985"/>
        <dbReference type="ChEBI" id="CHEBI:30616"/>
        <dbReference type="ChEBI" id="CHEBI:33019"/>
        <dbReference type="ChEBI" id="CHEBI:57464"/>
        <dbReference type="ChEBI" id="CHEBI:58115"/>
        <dbReference type="ChEBI" id="CHEBI:58359"/>
        <dbReference type="ChEBI" id="CHEBI:456215"/>
        <dbReference type="EC" id="6.3.5.2"/>
    </reaction>
</comment>
<comment type="pathway">
    <text evidence="1">Purine metabolism; GMP biosynthesis; GMP from XMP (L-Gln route): step 1/1.</text>
</comment>
<comment type="subunit">
    <text evidence="1">Homodimer.</text>
</comment>
<dbReference type="EC" id="6.3.5.2" evidence="1"/>
<dbReference type="EMBL" id="CP000961">
    <property type="protein sequence ID" value="ACA85846.1"/>
    <property type="molecule type" value="Genomic_DNA"/>
</dbReference>
<dbReference type="RefSeq" id="WP_012324192.1">
    <property type="nucleotide sequence ID" value="NC_010506.1"/>
</dbReference>
<dbReference type="SMR" id="B1KLC1"/>
<dbReference type="STRING" id="392500.Swoo_1560"/>
<dbReference type="MEROPS" id="C26.A07"/>
<dbReference type="KEGG" id="swd:Swoo_1560"/>
<dbReference type="eggNOG" id="COG0518">
    <property type="taxonomic scope" value="Bacteria"/>
</dbReference>
<dbReference type="eggNOG" id="COG0519">
    <property type="taxonomic scope" value="Bacteria"/>
</dbReference>
<dbReference type="HOGENOM" id="CLU_014340_0_5_6"/>
<dbReference type="UniPathway" id="UPA00189">
    <property type="reaction ID" value="UER00296"/>
</dbReference>
<dbReference type="Proteomes" id="UP000002168">
    <property type="component" value="Chromosome"/>
</dbReference>
<dbReference type="GO" id="GO:0005829">
    <property type="term" value="C:cytosol"/>
    <property type="evidence" value="ECO:0007669"/>
    <property type="project" value="TreeGrafter"/>
</dbReference>
<dbReference type="GO" id="GO:0005524">
    <property type="term" value="F:ATP binding"/>
    <property type="evidence" value="ECO:0007669"/>
    <property type="project" value="UniProtKB-UniRule"/>
</dbReference>
<dbReference type="GO" id="GO:0003921">
    <property type="term" value="F:GMP synthase activity"/>
    <property type="evidence" value="ECO:0007669"/>
    <property type="project" value="InterPro"/>
</dbReference>
<dbReference type="CDD" id="cd01742">
    <property type="entry name" value="GATase1_GMP_Synthase"/>
    <property type="match status" value="1"/>
</dbReference>
<dbReference type="CDD" id="cd01997">
    <property type="entry name" value="GMP_synthase_C"/>
    <property type="match status" value="1"/>
</dbReference>
<dbReference type="FunFam" id="3.30.300.10:FF:000002">
    <property type="entry name" value="GMP synthase [glutamine-hydrolyzing]"/>
    <property type="match status" value="1"/>
</dbReference>
<dbReference type="FunFam" id="3.40.50.620:FF:000001">
    <property type="entry name" value="GMP synthase [glutamine-hydrolyzing]"/>
    <property type="match status" value="1"/>
</dbReference>
<dbReference type="FunFam" id="3.40.50.880:FF:000001">
    <property type="entry name" value="GMP synthase [glutamine-hydrolyzing]"/>
    <property type="match status" value="1"/>
</dbReference>
<dbReference type="Gene3D" id="3.30.300.10">
    <property type="match status" value="1"/>
</dbReference>
<dbReference type="Gene3D" id="3.40.50.880">
    <property type="match status" value="1"/>
</dbReference>
<dbReference type="Gene3D" id="3.40.50.620">
    <property type="entry name" value="HUPs"/>
    <property type="match status" value="1"/>
</dbReference>
<dbReference type="HAMAP" id="MF_00344">
    <property type="entry name" value="GMP_synthase"/>
    <property type="match status" value="1"/>
</dbReference>
<dbReference type="InterPro" id="IPR029062">
    <property type="entry name" value="Class_I_gatase-like"/>
</dbReference>
<dbReference type="InterPro" id="IPR017926">
    <property type="entry name" value="GATASE"/>
</dbReference>
<dbReference type="InterPro" id="IPR001674">
    <property type="entry name" value="GMP_synth_C"/>
</dbReference>
<dbReference type="InterPro" id="IPR004739">
    <property type="entry name" value="GMP_synth_GATase"/>
</dbReference>
<dbReference type="InterPro" id="IPR022955">
    <property type="entry name" value="GMP_synthase"/>
</dbReference>
<dbReference type="InterPro" id="IPR025777">
    <property type="entry name" value="GMPS_ATP_PPase_dom"/>
</dbReference>
<dbReference type="InterPro" id="IPR022310">
    <property type="entry name" value="NAD/GMP_synthase"/>
</dbReference>
<dbReference type="InterPro" id="IPR014729">
    <property type="entry name" value="Rossmann-like_a/b/a_fold"/>
</dbReference>
<dbReference type="NCBIfam" id="TIGR00884">
    <property type="entry name" value="guaA_Cterm"/>
    <property type="match status" value="1"/>
</dbReference>
<dbReference type="NCBIfam" id="TIGR00888">
    <property type="entry name" value="guaA_Nterm"/>
    <property type="match status" value="1"/>
</dbReference>
<dbReference type="NCBIfam" id="NF000848">
    <property type="entry name" value="PRK00074.1"/>
    <property type="match status" value="1"/>
</dbReference>
<dbReference type="PANTHER" id="PTHR11922:SF2">
    <property type="entry name" value="GMP SYNTHASE [GLUTAMINE-HYDROLYZING]"/>
    <property type="match status" value="1"/>
</dbReference>
<dbReference type="PANTHER" id="PTHR11922">
    <property type="entry name" value="GMP SYNTHASE-RELATED"/>
    <property type="match status" value="1"/>
</dbReference>
<dbReference type="Pfam" id="PF00117">
    <property type="entry name" value="GATase"/>
    <property type="match status" value="1"/>
</dbReference>
<dbReference type="Pfam" id="PF00958">
    <property type="entry name" value="GMP_synt_C"/>
    <property type="match status" value="1"/>
</dbReference>
<dbReference type="Pfam" id="PF02540">
    <property type="entry name" value="NAD_synthase"/>
    <property type="match status" value="1"/>
</dbReference>
<dbReference type="PRINTS" id="PR00097">
    <property type="entry name" value="ANTSNTHASEII"/>
</dbReference>
<dbReference type="PRINTS" id="PR00099">
    <property type="entry name" value="CPSGATASE"/>
</dbReference>
<dbReference type="PRINTS" id="PR00096">
    <property type="entry name" value="GATASE"/>
</dbReference>
<dbReference type="SUPFAM" id="SSF52402">
    <property type="entry name" value="Adenine nucleotide alpha hydrolases-like"/>
    <property type="match status" value="1"/>
</dbReference>
<dbReference type="SUPFAM" id="SSF52317">
    <property type="entry name" value="Class I glutamine amidotransferase-like"/>
    <property type="match status" value="1"/>
</dbReference>
<dbReference type="SUPFAM" id="SSF54810">
    <property type="entry name" value="GMP synthetase C-terminal dimerisation domain"/>
    <property type="match status" value="1"/>
</dbReference>
<dbReference type="PROSITE" id="PS51273">
    <property type="entry name" value="GATASE_TYPE_1"/>
    <property type="match status" value="1"/>
</dbReference>
<dbReference type="PROSITE" id="PS51553">
    <property type="entry name" value="GMPS_ATP_PPASE"/>
    <property type="match status" value="1"/>
</dbReference>
<evidence type="ECO:0000255" key="1">
    <source>
        <dbReference type="HAMAP-Rule" id="MF_00344"/>
    </source>
</evidence>
<sequence length="525" mass="58425">MNNIHDHKILILDFGSQYTQLIARRIREIGVYCELWAWDVSEEQIKEFAPNGIILAGGPESVTAKDSPRAPEYVFTAGVPVLGICYGMQTMSEQLGGKVIQGVGEGEFGYAQVELQTQSELFKSIEDAISDSGKPLLDVWMSHGDKVSEIPEGFVTVANTETCPYAAMANEEKKFYGVQFHPEVTHTRQGKRMLEHFALDICQCDANWKPASIIEDAIERLKQQIGDDEVILGLSGGVDSSVVAMLLHRAIGDKLTCVFVDNGLLRLNEAQQVMDMFGDHFGLNIVHVDAENRFLDAMAGEADPEAKRKIIGHVFVDIFDEESKKCVNAKWLAQGTIYPDVIESAGSATGKAHVIKSHHNVGGLPDDMEMGLVEPLRELFKDEVRKIGLELGLPYDMLYRHPFPGPGLGVRVLGEVKKEYCDLLRLADAIFIEELHKADLYNKVSQAFTVFLPVRSVGVMGDGRKYDWVVSLRAVETIDFMTAHWAHLPYDFLGRVSNRIINEIDGISRVVYDISGKPPATIEWE</sequence>
<proteinExistence type="inferred from homology"/>